<evidence type="ECO:0000250" key="1">
    <source>
        <dbReference type="UniProtKB" id="Q5U5R9"/>
    </source>
</evidence>
<evidence type="ECO:0000255" key="2">
    <source>
        <dbReference type="PROSITE-ProRule" id="PRU00104"/>
    </source>
</evidence>
<evidence type="ECO:0000256" key="3">
    <source>
        <dbReference type="SAM" id="MobiDB-lite"/>
    </source>
</evidence>
<evidence type="ECO:0000305" key="4"/>
<evidence type="ECO:0007744" key="5">
    <source>
    </source>
</evidence>
<comment type="function">
    <text evidence="1">E3 ubiquitin-protein ligase which accepts ubiquitin from an E2 ubiquitin-conjugating enzyme in the form of a thioester and then directly transfers the ubiquitin to targeted substrates.</text>
</comment>
<comment type="catalytic activity">
    <reaction evidence="1">
        <text>S-ubiquitinyl-[E2 ubiquitin-conjugating enzyme]-L-cysteine + [acceptor protein]-L-lysine = [E2 ubiquitin-conjugating enzyme]-L-cysteine + N(6)-ubiquitinyl-[acceptor protein]-L-lysine.</text>
        <dbReference type="EC" id="2.3.2.26"/>
    </reaction>
</comment>
<comment type="pathway">
    <text evidence="1">Protein modification; protein ubiquitination.</text>
</comment>
<comment type="sequence caution" evidence="4">
    <conflict type="erroneous initiation">
        <sequence resource="EMBL-CDS" id="BAC29085"/>
    </conflict>
    <text>Truncated N-terminus.</text>
</comment>
<protein>
    <recommendedName>
        <fullName>Probable E3 ubiquitin-protein ligase HECTD2</fullName>
        <ecNumber evidence="1">2.3.2.26</ecNumber>
    </recommendedName>
    <alternativeName>
        <fullName>HECT domain-containing protein 2</fullName>
    </alternativeName>
    <alternativeName>
        <fullName>HECT-type E3 ubiquitin transferase HECTD2</fullName>
    </alternativeName>
</protein>
<sequence>MSEAARDLSPGAPPAVAAAAPEERKGKEPEREKLPPIVTAGAAAGLDRGSKGQISTFSSFVSTVTQKKEAAENRSSPTHLALPNIRNVRDLPPICLDVRQKQRMSVEALPSEVKVPPLPEPSLPSQPKTVKDFEEDLEKAEATGNWKTVHAFYITAFDSFTELNTAFKKDATASFNTIEDSGLNANLVNAVFDALLNTPQDIQKSVLKGIINSLLQEWKGPRTKDDLRAYFILLQNPQFNITSTYVIYAHLLRQIATLVEADHHFLVHWLKKLSQKKFKQLVERLLQFVSLRLFPAKPEEFPPLTKCTWWIPSAAKVLALLNTANNLVHPPLVPYTDFYNSTLDHIDLMEEYHTWQSFGNSHRFSFCQYPFVISIAAKKIIIQRDSEQQMISIARQSLVDKVSRRQRPDMNMLFLNMKVRRTHLVSDSLDELTRKRADLKKKLKVTFVGEAGLDMGGLTKEWFLLLIRQIFHPDYGMFTYHKDSHCHWFSSFKCDNYSEFRLVGILMGLAVYNSITLDIRFPPCCYKKLLSPPVVPSDQSTPVGICSVTIDDLCQVMPELAHGLKELLSYEGNVEEDFYSTFQVFQEEFGVIKSYNLKPGGDKIPVTNQNRREYVQLYTDFLLNKSIYKQFAAFYCGFHSVCASNALMLLRPEEVEILVCGSPELDMHALQRSTQYDGYAKTDLTIRYFWDVVLGFPLELQKKLLHFTTGSDRVPVGGMADLNFKISKNETSTNWLPVAHTCFNQLCLPPYKSKKDLKQKLIIGISNSEGFGLE</sequence>
<accession>Q8CDU6</accession>
<accession>E9QK99</accession>
<accession>Q8CBQ9</accession>
<keyword id="KW-0597">Phosphoprotein</keyword>
<keyword id="KW-1185">Reference proteome</keyword>
<keyword id="KW-0808">Transferase</keyword>
<keyword id="KW-0833">Ubl conjugation pathway</keyword>
<reference key="1">
    <citation type="journal article" date="2005" name="Science">
        <title>The transcriptional landscape of the mammalian genome.</title>
        <authorList>
            <person name="Carninci P."/>
            <person name="Kasukawa T."/>
            <person name="Katayama S."/>
            <person name="Gough J."/>
            <person name="Frith M.C."/>
            <person name="Maeda N."/>
            <person name="Oyama R."/>
            <person name="Ravasi T."/>
            <person name="Lenhard B."/>
            <person name="Wells C."/>
            <person name="Kodzius R."/>
            <person name="Shimokawa K."/>
            <person name="Bajic V.B."/>
            <person name="Brenner S.E."/>
            <person name="Batalov S."/>
            <person name="Forrest A.R."/>
            <person name="Zavolan M."/>
            <person name="Davis M.J."/>
            <person name="Wilming L.G."/>
            <person name="Aidinis V."/>
            <person name="Allen J.E."/>
            <person name="Ambesi-Impiombato A."/>
            <person name="Apweiler R."/>
            <person name="Aturaliya R.N."/>
            <person name="Bailey T.L."/>
            <person name="Bansal M."/>
            <person name="Baxter L."/>
            <person name="Beisel K.W."/>
            <person name="Bersano T."/>
            <person name="Bono H."/>
            <person name="Chalk A.M."/>
            <person name="Chiu K.P."/>
            <person name="Choudhary V."/>
            <person name="Christoffels A."/>
            <person name="Clutterbuck D.R."/>
            <person name="Crowe M.L."/>
            <person name="Dalla E."/>
            <person name="Dalrymple B.P."/>
            <person name="de Bono B."/>
            <person name="Della Gatta G."/>
            <person name="di Bernardo D."/>
            <person name="Down T."/>
            <person name="Engstrom P."/>
            <person name="Fagiolini M."/>
            <person name="Faulkner G."/>
            <person name="Fletcher C.F."/>
            <person name="Fukushima T."/>
            <person name="Furuno M."/>
            <person name="Futaki S."/>
            <person name="Gariboldi M."/>
            <person name="Georgii-Hemming P."/>
            <person name="Gingeras T.R."/>
            <person name="Gojobori T."/>
            <person name="Green R.E."/>
            <person name="Gustincich S."/>
            <person name="Harbers M."/>
            <person name="Hayashi Y."/>
            <person name="Hensch T.K."/>
            <person name="Hirokawa N."/>
            <person name="Hill D."/>
            <person name="Huminiecki L."/>
            <person name="Iacono M."/>
            <person name="Ikeo K."/>
            <person name="Iwama A."/>
            <person name="Ishikawa T."/>
            <person name="Jakt M."/>
            <person name="Kanapin A."/>
            <person name="Katoh M."/>
            <person name="Kawasawa Y."/>
            <person name="Kelso J."/>
            <person name="Kitamura H."/>
            <person name="Kitano H."/>
            <person name="Kollias G."/>
            <person name="Krishnan S.P."/>
            <person name="Kruger A."/>
            <person name="Kummerfeld S.K."/>
            <person name="Kurochkin I.V."/>
            <person name="Lareau L.F."/>
            <person name="Lazarevic D."/>
            <person name="Lipovich L."/>
            <person name="Liu J."/>
            <person name="Liuni S."/>
            <person name="McWilliam S."/>
            <person name="Madan Babu M."/>
            <person name="Madera M."/>
            <person name="Marchionni L."/>
            <person name="Matsuda H."/>
            <person name="Matsuzawa S."/>
            <person name="Miki H."/>
            <person name="Mignone F."/>
            <person name="Miyake S."/>
            <person name="Morris K."/>
            <person name="Mottagui-Tabar S."/>
            <person name="Mulder N."/>
            <person name="Nakano N."/>
            <person name="Nakauchi H."/>
            <person name="Ng P."/>
            <person name="Nilsson R."/>
            <person name="Nishiguchi S."/>
            <person name="Nishikawa S."/>
            <person name="Nori F."/>
            <person name="Ohara O."/>
            <person name="Okazaki Y."/>
            <person name="Orlando V."/>
            <person name="Pang K.C."/>
            <person name="Pavan W.J."/>
            <person name="Pavesi G."/>
            <person name="Pesole G."/>
            <person name="Petrovsky N."/>
            <person name="Piazza S."/>
            <person name="Reed J."/>
            <person name="Reid J.F."/>
            <person name="Ring B.Z."/>
            <person name="Ringwald M."/>
            <person name="Rost B."/>
            <person name="Ruan Y."/>
            <person name="Salzberg S.L."/>
            <person name="Sandelin A."/>
            <person name="Schneider C."/>
            <person name="Schoenbach C."/>
            <person name="Sekiguchi K."/>
            <person name="Semple C.A."/>
            <person name="Seno S."/>
            <person name="Sessa L."/>
            <person name="Sheng Y."/>
            <person name="Shibata Y."/>
            <person name="Shimada H."/>
            <person name="Shimada K."/>
            <person name="Silva D."/>
            <person name="Sinclair B."/>
            <person name="Sperling S."/>
            <person name="Stupka E."/>
            <person name="Sugiura K."/>
            <person name="Sultana R."/>
            <person name="Takenaka Y."/>
            <person name="Taki K."/>
            <person name="Tammoja K."/>
            <person name="Tan S.L."/>
            <person name="Tang S."/>
            <person name="Taylor M.S."/>
            <person name="Tegner J."/>
            <person name="Teichmann S.A."/>
            <person name="Ueda H.R."/>
            <person name="van Nimwegen E."/>
            <person name="Verardo R."/>
            <person name="Wei C.L."/>
            <person name="Yagi K."/>
            <person name="Yamanishi H."/>
            <person name="Zabarovsky E."/>
            <person name="Zhu S."/>
            <person name="Zimmer A."/>
            <person name="Hide W."/>
            <person name="Bult C."/>
            <person name="Grimmond S.M."/>
            <person name="Teasdale R.D."/>
            <person name="Liu E.T."/>
            <person name="Brusic V."/>
            <person name="Quackenbush J."/>
            <person name="Wahlestedt C."/>
            <person name="Mattick J.S."/>
            <person name="Hume D.A."/>
            <person name="Kai C."/>
            <person name="Sasaki D."/>
            <person name="Tomaru Y."/>
            <person name="Fukuda S."/>
            <person name="Kanamori-Katayama M."/>
            <person name="Suzuki M."/>
            <person name="Aoki J."/>
            <person name="Arakawa T."/>
            <person name="Iida J."/>
            <person name="Imamura K."/>
            <person name="Itoh M."/>
            <person name="Kato T."/>
            <person name="Kawaji H."/>
            <person name="Kawagashira N."/>
            <person name="Kawashima T."/>
            <person name="Kojima M."/>
            <person name="Kondo S."/>
            <person name="Konno H."/>
            <person name="Nakano K."/>
            <person name="Ninomiya N."/>
            <person name="Nishio T."/>
            <person name="Okada M."/>
            <person name="Plessy C."/>
            <person name="Shibata K."/>
            <person name="Shiraki T."/>
            <person name="Suzuki S."/>
            <person name="Tagami M."/>
            <person name="Waki K."/>
            <person name="Watahiki A."/>
            <person name="Okamura-Oho Y."/>
            <person name="Suzuki H."/>
            <person name="Kawai J."/>
            <person name="Hayashizaki Y."/>
        </authorList>
    </citation>
    <scope>NUCLEOTIDE SEQUENCE [LARGE SCALE MRNA]</scope>
    <source>
        <strain>C57BL/6J</strain>
        <tissue>Testis</tissue>
        <tissue>Urinary bladder</tissue>
    </source>
</reference>
<reference key="2">
    <citation type="journal article" date="2009" name="PLoS Biol.">
        <title>Lineage-specific biology revealed by a finished genome assembly of the mouse.</title>
        <authorList>
            <person name="Church D.M."/>
            <person name="Goodstadt L."/>
            <person name="Hillier L.W."/>
            <person name="Zody M.C."/>
            <person name="Goldstein S."/>
            <person name="She X."/>
            <person name="Bult C.J."/>
            <person name="Agarwala R."/>
            <person name="Cherry J.L."/>
            <person name="DiCuccio M."/>
            <person name="Hlavina W."/>
            <person name="Kapustin Y."/>
            <person name="Meric P."/>
            <person name="Maglott D."/>
            <person name="Birtle Z."/>
            <person name="Marques A.C."/>
            <person name="Graves T."/>
            <person name="Zhou S."/>
            <person name="Teague B."/>
            <person name="Potamousis K."/>
            <person name="Churas C."/>
            <person name="Place M."/>
            <person name="Herschleb J."/>
            <person name="Runnheim R."/>
            <person name="Forrest D."/>
            <person name="Amos-Landgraf J."/>
            <person name="Schwartz D.C."/>
            <person name="Cheng Z."/>
            <person name="Lindblad-Toh K."/>
            <person name="Eichler E.E."/>
            <person name="Ponting C.P."/>
        </authorList>
    </citation>
    <scope>NUCLEOTIDE SEQUENCE [LARGE SCALE GENOMIC DNA]</scope>
    <source>
        <strain>C57BL/6J</strain>
    </source>
</reference>
<reference key="3">
    <citation type="journal article" date="2010" name="Cell">
        <title>A tissue-specific atlas of mouse protein phosphorylation and expression.</title>
        <authorList>
            <person name="Huttlin E.L."/>
            <person name="Jedrychowski M.P."/>
            <person name="Elias J.E."/>
            <person name="Goswami T."/>
            <person name="Rad R."/>
            <person name="Beausoleil S.A."/>
            <person name="Villen J."/>
            <person name="Haas W."/>
            <person name="Sowa M.E."/>
            <person name="Gygi S.P."/>
        </authorList>
    </citation>
    <scope>PHOSPHORYLATION [LARGE SCALE ANALYSIS] AT SER-9</scope>
    <scope>IDENTIFICATION BY MASS SPECTROMETRY [LARGE SCALE ANALYSIS]</scope>
    <source>
        <tissue>Testis</tissue>
    </source>
</reference>
<organism>
    <name type="scientific">Mus musculus</name>
    <name type="common">Mouse</name>
    <dbReference type="NCBI Taxonomy" id="10090"/>
    <lineage>
        <taxon>Eukaryota</taxon>
        <taxon>Metazoa</taxon>
        <taxon>Chordata</taxon>
        <taxon>Craniata</taxon>
        <taxon>Vertebrata</taxon>
        <taxon>Euteleostomi</taxon>
        <taxon>Mammalia</taxon>
        <taxon>Eutheria</taxon>
        <taxon>Euarchontoglires</taxon>
        <taxon>Glires</taxon>
        <taxon>Rodentia</taxon>
        <taxon>Myomorpha</taxon>
        <taxon>Muroidea</taxon>
        <taxon>Muridae</taxon>
        <taxon>Murinae</taxon>
        <taxon>Mus</taxon>
        <taxon>Mus</taxon>
    </lineage>
</organism>
<name>HECD2_MOUSE</name>
<proteinExistence type="evidence at protein level"/>
<feature type="chain" id="PRO_0000240852" description="Probable E3 ubiquitin-protein ligase HECTD2">
    <location>
        <begin position="1"/>
        <end position="774"/>
    </location>
</feature>
<feature type="domain" description="HECT" evidence="2">
    <location>
        <begin position="435"/>
        <end position="774"/>
    </location>
</feature>
<feature type="region of interest" description="Disordered" evidence="3">
    <location>
        <begin position="1"/>
        <end position="51"/>
    </location>
</feature>
<feature type="compositionally biased region" description="Basic and acidic residues" evidence="3">
    <location>
        <begin position="21"/>
        <end position="34"/>
    </location>
</feature>
<feature type="active site" description="Glycyl thioester intermediate" evidence="2">
    <location>
        <position position="742"/>
    </location>
</feature>
<feature type="modified residue" description="Phosphoserine" evidence="5">
    <location>
        <position position="9"/>
    </location>
</feature>
<feature type="sequence conflict" description="In Ref. 1; BAC26510." evidence="4" ref="1">
    <original>A</original>
    <variation>G</variation>
    <location>
        <position position="315"/>
    </location>
</feature>
<feature type="sequence conflict" description="In Ref. 1; BAC26510." evidence="4" ref="1">
    <original>K</original>
    <variation>R</variation>
    <location>
        <position position="754"/>
    </location>
</feature>
<gene>
    <name type="primary">Hectd2</name>
</gene>
<dbReference type="EC" id="2.3.2.26" evidence="1"/>
<dbReference type="EMBL" id="AK029549">
    <property type="protein sequence ID" value="BAC26510.1"/>
    <property type="molecule type" value="mRNA"/>
</dbReference>
<dbReference type="EMBL" id="AK035511">
    <property type="protein sequence ID" value="BAC29085.1"/>
    <property type="status" value="ALT_INIT"/>
    <property type="molecule type" value="mRNA"/>
</dbReference>
<dbReference type="EMBL" id="AC113514">
    <property type="status" value="NOT_ANNOTATED_CDS"/>
    <property type="molecule type" value="Genomic_DNA"/>
</dbReference>
<dbReference type="EMBL" id="AC119947">
    <property type="status" value="NOT_ANNOTATED_CDS"/>
    <property type="molecule type" value="Genomic_DNA"/>
</dbReference>
<dbReference type="CCDS" id="CCDS29773.1"/>
<dbReference type="RefSeq" id="NP_001156943.1">
    <property type="nucleotide sequence ID" value="NM_001163471.1"/>
</dbReference>
<dbReference type="RefSeq" id="NP_766225.2">
    <property type="nucleotide sequence ID" value="NM_172637.3"/>
</dbReference>
<dbReference type="SMR" id="Q8CDU6"/>
<dbReference type="BioGRID" id="230470">
    <property type="interactions" value="2"/>
</dbReference>
<dbReference type="FunCoup" id="Q8CDU6">
    <property type="interactions" value="706"/>
</dbReference>
<dbReference type="STRING" id="10090.ENSMUSP00000128387"/>
<dbReference type="iPTMnet" id="Q8CDU6"/>
<dbReference type="PhosphoSitePlus" id="Q8CDU6"/>
<dbReference type="PaxDb" id="10090-ENSMUSP00000128387"/>
<dbReference type="ProteomicsDB" id="269555"/>
<dbReference type="Antibodypedia" id="30347">
    <property type="antibodies" value="183 antibodies from 25 providers"/>
</dbReference>
<dbReference type="DNASU" id="226098"/>
<dbReference type="Ensembl" id="ENSMUST00000047247.12">
    <property type="protein sequence ID" value="ENSMUSP00000042646.6"/>
    <property type="gene ID" value="ENSMUSG00000041180.14"/>
</dbReference>
<dbReference type="GeneID" id="226098"/>
<dbReference type="KEGG" id="mmu:226098"/>
<dbReference type="UCSC" id="uc008hho.2">
    <property type="organism name" value="mouse"/>
</dbReference>
<dbReference type="AGR" id="MGI:2442663"/>
<dbReference type="CTD" id="143279"/>
<dbReference type="MGI" id="MGI:2442663">
    <property type="gene designation" value="Hectd2"/>
</dbReference>
<dbReference type="VEuPathDB" id="HostDB:ENSMUSG00000041180"/>
<dbReference type="eggNOG" id="KOG0941">
    <property type="taxonomic scope" value="Eukaryota"/>
</dbReference>
<dbReference type="GeneTree" id="ENSGT00940000157750"/>
<dbReference type="HOGENOM" id="CLU_002173_5_0_1"/>
<dbReference type="InParanoid" id="Q8CDU6"/>
<dbReference type="OMA" id="DLMSEYY"/>
<dbReference type="OrthoDB" id="5981550at2759"/>
<dbReference type="Reactome" id="R-MMU-983168">
    <property type="pathway name" value="Antigen processing: Ubiquitination &amp; Proteasome degradation"/>
</dbReference>
<dbReference type="UniPathway" id="UPA00143"/>
<dbReference type="BioGRID-ORCS" id="226098">
    <property type="hits" value="4 hits in 80 CRISPR screens"/>
</dbReference>
<dbReference type="ChiTaRS" id="Hectd2">
    <property type="organism name" value="mouse"/>
</dbReference>
<dbReference type="PRO" id="PR:Q8CDU6"/>
<dbReference type="Proteomes" id="UP000000589">
    <property type="component" value="Chromosome 19"/>
</dbReference>
<dbReference type="RNAct" id="Q8CDU6">
    <property type="molecule type" value="protein"/>
</dbReference>
<dbReference type="Bgee" id="ENSMUSG00000041180">
    <property type="expression patterns" value="Expressed in lateral septal nucleus and 209 other cell types or tissues"/>
</dbReference>
<dbReference type="ExpressionAtlas" id="Q8CDU6">
    <property type="expression patterns" value="baseline and differential"/>
</dbReference>
<dbReference type="GO" id="GO:0061630">
    <property type="term" value="F:ubiquitin protein ligase activity"/>
    <property type="evidence" value="ECO:0007669"/>
    <property type="project" value="InterPro"/>
</dbReference>
<dbReference type="GO" id="GO:0000209">
    <property type="term" value="P:protein polyubiquitination"/>
    <property type="evidence" value="ECO:0007669"/>
    <property type="project" value="InterPro"/>
</dbReference>
<dbReference type="CDD" id="cd00078">
    <property type="entry name" value="HECTc"/>
    <property type="match status" value="1"/>
</dbReference>
<dbReference type="FunFam" id="3.30.2410.10:FF:000009">
    <property type="entry name" value="Probable E3 ubiquitin-protein ligase HECTD2"/>
    <property type="match status" value="1"/>
</dbReference>
<dbReference type="FunFam" id="3.90.1750.10:FF:000023">
    <property type="entry name" value="probable E3 ubiquitin-protein ligase HECTD2 isoform X2"/>
    <property type="match status" value="1"/>
</dbReference>
<dbReference type="FunFam" id="3.30.2160.10:FF:000004">
    <property type="entry name" value="probable E3 ubiquitin-protein ligase HERC4 isoform X1"/>
    <property type="match status" value="1"/>
</dbReference>
<dbReference type="Gene3D" id="3.30.2160.10">
    <property type="entry name" value="Hect, E3 ligase catalytic domain"/>
    <property type="match status" value="1"/>
</dbReference>
<dbReference type="Gene3D" id="3.30.2410.10">
    <property type="entry name" value="Hect, E3 ligase catalytic domain"/>
    <property type="match status" value="1"/>
</dbReference>
<dbReference type="Gene3D" id="3.90.1750.10">
    <property type="entry name" value="Hect, E3 ligase catalytic domains"/>
    <property type="match status" value="1"/>
</dbReference>
<dbReference type="InterPro" id="IPR044611">
    <property type="entry name" value="E3A/B/C-like"/>
</dbReference>
<dbReference type="InterPro" id="IPR000569">
    <property type="entry name" value="HECT_dom"/>
</dbReference>
<dbReference type="InterPro" id="IPR035983">
    <property type="entry name" value="Hect_E3_ubiquitin_ligase"/>
</dbReference>
<dbReference type="PANTHER" id="PTHR45700:SF9">
    <property type="entry name" value="HECT-TYPE E3 UBIQUITIN TRANSFERASE"/>
    <property type="match status" value="1"/>
</dbReference>
<dbReference type="PANTHER" id="PTHR45700">
    <property type="entry name" value="UBIQUITIN-PROTEIN LIGASE E3C"/>
    <property type="match status" value="1"/>
</dbReference>
<dbReference type="Pfam" id="PF00632">
    <property type="entry name" value="HECT"/>
    <property type="match status" value="1"/>
</dbReference>
<dbReference type="SMART" id="SM00119">
    <property type="entry name" value="HECTc"/>
    <property type="match status" value="1"/>
</dbReference>
<dbReference type="SUPFAM" id="SSF56204">
    <property type="entry name" value="Hect, E3 ligase catalytic domain"/>
    <property type="match status" value="1"/>
</dbReference>
<dbReference type="PROSITE" id="PS50237">
    <property type="entry name" value="HECT"/>
    <property type="match status" value="1"/>
</dbReference>